<feature type="chain" id="PRO_0000350649" description="Glycerol-1-phosphate dehydrogenase [NAD(P)+]">
    <location>
        <begin position="1"/>
        <end position="359"/>
    </location>
</feature>
<feature type="binding site" evidence="1">
    <location>
        <begin position="107"/>
        <end position="111"/>
    </location>
    <ligand>
        <name>NAD(+)</name>
        <dbReference type="ChEBI" id="CHEBI:57540"/>
    </ligand>
</feature>
<feature type="binding site" evidence="1">
    <location>
        <begin position="129"/>
        <end position="132"/>
    </location>
    <ligand>
        <name>NAD(+)</name>
        <dbReference type="ChEBI" id="CHEBI:57540"/>
    </ligand>
</feature>
<feature type="binding site" evidence="1">
    <location>
        <position position="134"/>
    </location>
    <ligand>
        <name>substrate</name>
    </ligand>
</feature>
<feature type="binding site" evidence="1">
    <location>
        <position position="138"/>
    </location>
    <ligand>
        <name>NAD(+)</name>
        <dbReference type="ChEBI" id="CHEBI:57540"/>
    </ligand>
</feature>
<feature type="binding site" evidence="1">
    <location>
        <position position="181"/>
    </location>
    <ligand>
        <name>substrate</name>
    </ligand>
</feature>
<feature type="binding site" evidence="1">
    <location>
        <position position="181"/>
    </location>
    <ligand>
        <name>Zn(2+)</name>
        <dbReference type="ChEBI" id="CHEBI:29105"/>
        <note>catalytic</note>
    </ligand>
</feature>
<feature type="binding site" evidence="1">
    <location>
        <position position="261"/>
    </location>
    <ligand>
        <name>Zn(2+)</name>
        <dbReference type="ChEBI" id="CHEBI:29105"/>
        <note>catalytic</note>
    </ligand>
</feature>
<feature type="binding site" evidence="1">
    <location>
        <position position="265"/>
    </location>
    <ligand>
        <name>substrate</name>
    </ligand>
</feature>
<feature type="binding site" evidence="1">
    <location>
        <position position="277"/>
    </location>
    <ligand>
        <name>Zn(2+)</name>
        <dbReference type="ChEBI" id="CHEBI:29105"/>
        <note>catalytic</note>
    </ligand>
</feature>
<keyword id="KW-0963">Cytoplasm</keyword>
<keyword id="KW-0444">Lipid biosynthesis</keyword>
<keyword id="KW-0443">Lipid metabolism</keyword>
<keyword id="KW-0479">Metal-binding</keyword>
<keyword id="KW-0520">NAD</keyword>
<keyword id="KW-0521">NADP</keyword>
<keyword id="KW-0560">Oxidoreductase</keyword>
<keyword id="KW-0594">Phospholipid biosynthesis</keyword>
<keyword id="KW-1208">Phospholipid metabolism</keyword>
<keyword id="KW-1185">Reference proteome</keyword>
<keyword id="KW-0862">Zinc</keyword>
<organism>
    <name type="scientific">Methanoregula boonei (strain DSM 21154 / JCM 14090 / 6A8)</name>
    <dbReference type="NCBI Taxonomy" id="456442"/>
    <lineage>
        <taxon>Archaea</taxon>
        <taxon>Methanobacteriati</taxon>
        <taxon>Methanobacteriota</taxon>
        <taxon>Stenosarchaea group</taxon>
        <taxon>Methanomicrobia</taxon>
        <taxon>Methanomicrobiales</taxon>
        <taxon>Methanoregulaceae</taxon>
        <taxon>Methanoregula</taxon>
    </lineage>
</organism>
<comment type="function">
    <text evidence="1">Catalyzes the NAD(P)H-dependent reduction of dihydroxyacetonephosphate (DHAP or glycerone phosphate) to glycerol 1-phosphate (G1P). The G1P thus generated is used as the glycerophosphate backbone of phospholipids in the cellular membranes of Archaea.</text>
</comment>
<comment type="catalytic activity">
    <reaction evidence="1">
        <text>sn-glycerol 1-phosphate + NAD(+) = dihydroxyacetone phosphate + NADH + H(+)</text>
        <dbReference type="Rhea" id="RHEA:21412"/>
        <dbReference type="ChEBI" id="CHEBI:15378"/>
        <dbReference type="ChEBI" id="CHEBI:57540"/>
        <dbReference type="ChEBI" id="CHEBI:57642"/>
        <dbReference type="ChEBI" id="CHEBI:57685"/>
        <dbReference type="ChEBI" id="CHEBI:57945"/>
        <dbReference type="EC" id="1.1.1.261"/>
    </reaction>
</comment>
<comment type="catalytic activity">
    <reaction evidence="1">
        <text>sn-glycerol 1-phosphate + NADP(+) = dihydroxyacetone phosphate + NADPH + H(+)</text>
        <dbReference type="Rhea" id="RHEA:21416"/>
        <dbReference type="ChEBI" id="CHEBI:15378"/>
        <dbReference type="ChEBI" id="CHEBI:57642"/>
        <dbReference type="ChEBI" id="CHEBI:57685"/>
        <dbReference type="ChEBI" id="CHEBI:57783"/>
        <dbReference type="ChEBI" id="CHEBI:58349"/>
        <dbReference type="EC" id="1.1.1.261"/>
    </reaction>
</comment>
<comment type="cofactor">
    <cofactor evidence="1">
        <name>Zn(2+)</name>
        <dbReference type="ChEBI" id="CHEBI:29105"/>
    </cofactor>
    <text evidence="1">Binds 1 zinc ion per subunit.</text>
</comment>
<comment type="pathway">
    <text evidence="1">Membrane lipid metabolism; glycerophospholipid metabolism.</text>
</comment>
<comment type="subcellular location">
    <subcellularLocation>
        <location evidence="1">Cytoplasm</location>
    </subcellularLocation>
</comment>
<comment type="similarity">
    <text evidence="1">Belongs to the glycerol-1-phosphate dehydrogenase family.</text>
</comment>
<protein>
    <recommendedName>
        <fullName evidence="1">Glycerol-1-phosphate dehydrogenase [NAD(P)+]</fullName>
        <shortName evidence="1">G1P dehydrogenase</shortName>
        <shortName evidence="1">G1PDH</shortName>
        <ecNumber evidence="1">1.1.1.261</ecNumber>
    </recommendedName>
    <alternativeName>
        <fullName evidence="1">Enantiomeric glycerophosphate synthase</fullName>
    </alternativeName>
    <alternativeName>
        <fullName evidence="1">sn-glycerol-1-phosphate dehydrogenase</fullName>
    </alternativeName>
</protein>
<name>G1PDH_METB6</name>
<proteinExistence type="inferred from homology"/>
<sequence length="359" mass="38384">MSPDAIKLLKEKVFDKSKWMQLPRDVVIGHDVLGQIAPVCEDLKLGRSALLISGKNTMDRAGKTVQDVIGKTCDVMVYISDEISPAVIKDAEKAAKDVDFVIGVGGGRVIDTAKIVSYNLDRQFVSVPTAASHDGIASARASVPTGEGNVSLEAHPPIAIIADTCIIASAPHRLLAAGCADVISNYTAILDWEMAHRIKGEPMSEYAVALSKMTAEILVKNADLIRPNQEQSAWFVTKALVSSGVAMSIAGSSRPASGGEHKFSHALDRLAPNKALHGESCGIGTIISMYLHGGDWRGIRQSLRTIGAPVTPTDVGIADEIAVEALLMAKTIRPERFTIFDMGITRDSAEKLIQMLYAD</sequence>
<accession>A7I9R4</accession>
<dbReference type="EC" id="1.1.1.261" evidence="1"/>
<dbReference type="EMBL" id="CP000780">
    <property type="protein sequence ID" value="ABS56475.1"/>
    <property type="molecule type" value="Genomic_DNA"/>
</dbReference>
<dbReference type="RefSeq" id="WP_012107530.1">
    <property type="nucleotide sequence ID" value="NC_009712.1"/>
</dbReference>
<dbReference type="SMR" id="A7I9R4"/>
<dbReference type="STRING" id="456442.Mboo_1960"/>
<dbReference type="GeneID" id="5409997"/>
<dbReference type="KEGG" id="mbn:Mboo_1960"/>
<dbReference type="eggNOG" id="arCOG00982">
    <property type="taxonomic scope" value="Archaea"/>
</dbReference>
<dbReference type="HOGENOM" id="CLU_038362_0_0_2"/>
<dbReference type="OrthoDB" id="8656at2157"/>
<dbReference type="UniPathway" id="UPA00940"/>
<dbReference type="Proteomes" id="UP000002408">
    <property type="component" value="Chromosome"/>
</dbReference>
<dbReference type="GO" id="GO:0005737">
    <property type="term" value="C:cytoplasm"/>
    <property type="evidence" value="ECO:0007669"/>
    <property type="project" value="UniProtKB-SubCell"/>
</dbReference>
<dbReference type="GO" id="GO:0106357">
    <property type="term" value="F:glycerol-1-phosphate dehydrogenase (NAD+) activity"/>
    <property type="evidence" value="ECO:0007669"/>
    <property type="project" value="RHEA"/>
</dbReference>
<dbReference type="GO" id="GO:0106358">
    <property type="term" value="F:glycerol-1-phosphate dehydrogenase (NADP+) activity"/>
    <property type="evidence" value="ECO:0007669"/>
    <property type="project" value="RHEA"/>
</dbReference>
<dbReference type="GO" id="GO:0046872">
    <property type="term" value="F:metal ion binding"/>
    <property type="evidence" value="ECO:0007669"/>
    <property type="project" value="UniProtKB-KW"/>
</dbReference>
<dbReference type="GO" id="GO:0006650">
    <property type="term" value="P:glycerophospholipid metabolic process"/>
    <property type="evidence" value="ECO:0007669"/>
    <property type="project" value="UniProtKB-UniRule"/>
</dbReference>
<dbReference type="GO" id="GO:0008654">
    <property type="term" value="P:phospholipid biosynthetic process"/>
    <property type="evidence" value="ECO:0007669"/>
    <property type="project" value="UniProtKB-KW"/>
</dbReference>
<dbReference type="CDD" id="cd08173">
    <property type="entry name" value="Gro1PDH"/>
    <property type="match status" value="1"/>
</dbReference>
<dbReference type="Gene3D" id="3.40.50.1970">
    <property type="match status" value="1"/>
</dbReference>
<dbReference type="Gene3D" id="1.20.1090.10">
    <property type="entry name" value="Dehydroquinate synthase-like - alpha domain"/>
    <property type="match status" value="1"/>
</dbReference>
<dbReference type="HAMAP" id="MF_00497_A">
    <property type="entry name" value="G1P_dehydrogenase_A"/>
    <property type="match status" value="1"/>
</dbReference>
<dbReference type="InterPro" id="IPR023002">
    <property type="entry name" value="G1P_dehydrogenase_arc"/>
</dbReference>
<dbReference type="InterPro" id="IPR032837">
    <property type="entry name" value="G1PDH"/>
</dbReference>
<dbReference type="InterPro" id="IPR016205">
    <property type="entry name" value="Glycerol_DH"/>
</dbReference>
<dbReference type="NCBIfam" id="NF002022">
    <property type="entry name" value="PRK00843.1"/>
    <property type="match status" value="1"/>
</dbReference>
<dbReference type="PANTHER" id="PTHR43616">
    <property type="entry name" value="GLYCEROL DEHYDROGENASE"/>
    <property type="match status" value="1"/>
</dbReference>
<dbReference type="PANTHER" id="PTHR43616:SF5">
    <property type="entry name" value="GLYCEROL DEHYDROGENASE 1"/>
    <property type="match status" value="1"/>
</dbReference>
<dbReference type="Pfam" id="PF13685">
    <property type="entry name" value="Fe-ADH_2"/>
    <property type="match status" value="1"/>
</dbReference>
<dbReference type="PIRSF" id="PIRSF000112">
    <property type="entry name" value="Glycerol_dehydrogenase"/>
    <property type="match status" value="1"/>
</dbReference>
<dbReference type="SUPFAM" id="SSF56796">
    <property type="entry name" value="Dehydroquinate synthase-like"/>
    <property type="match status" value="1"/>
</dbReference>
<reference key="1">
    <citation type="journal article" date="2015" name="Microbiology">
        <title>Genome of Methanoregula boonei 6A8 reveals adaptations to oligotrophic peatland environments.</title>
        <authorList>
            <person name="Braeuer S."/>
            <person name="Cadillo-Quiroz H."/>
            <person name="Kyrpides N."/>
            <person name="Woyke T."/>
            <person name="Goodwin L."/>
            <person name="Detter C."/>
            <person name="Podell S."/>
            <person name="Yavitt J.B."/>
            <person name="Zinder S.H."/>
        </authorList>
    </citation>
    <scope>NUCLEOTIDE SEQUENCE [LARGE SCALE GENOMIC DNA]</scope>
    <source>
        <strain>DSM 21154 / JCM 14090 / 6A8</strain>
    </source>
</reference>
<gene>
    <name evidence="1" type="primary">egsA</name>
    <name type="ordered locus">Mboo_1960</name>
</gene>
<evidence type="ECO:0000255" key="1">
    <source>
        <dbReference type="HAMAP-Rule" id="MF_00497"/>
    </source>
</evidence>